<accession>Q4A5C2</accession>
<name>RL4_MYCS5</name>
<reference key="1">
    <citation type="journal article" date="2005" name="J. Bacteriol.">
        <title>Swine and poultry pathogens: the complete genome sequences of two strains of Mycoplasma hyopneumoniae and a strain of Mycoplasma synoviae.</title>
        <authorList>
            <person name="Vasconcelos A.T.R."/>
            <person name="Ferreira H.B."/>
            <person name="Bizarro C.V."/>
            <person name="Bonatto S.L."/>
            <person name="Carvalho M.O."/>
            <person name="Pinto P.M."/>
            <person name="Almeida D.F."/>
            <person name="Almeida L.G.P."/>
            <person name="Almeida R."/>
            <person name="Alves-Junior L."/>
            <person name="Assuncao E.N."/>
            <person name="Azevedo V.A.C."/>
            <person name="Bogo M.R."/>
            <person name="Brigido M.M."/>
            <person name="Brocchi M."/>
            <person name="Burity H.A."/>
            <person name="Camargo A.A."/>
            <person name="Camargo S.S."/>
            <person name="Carepo M.S."/>
            <person name="Carraro D.M."/>
            <person name="de Mattos Cascardo J.C."/>
            <person name="Castro L.A."/>
            <person name="Cavalcanti G."/>
            <person name="Chemale G."/>
            <person name="Collevatti R.G."/>
            <person name="Cunha C.W."/>
            <person name="Dallagiovanna B."/>
            <person name="Dambros B.P."/>
            <person name="Dellagostin O.A."/>
            <person name="Falcao C."/>
            <person name="Fantinatti-Garboggini F."/>
            <person name="Felipe M.S.S."/>
            <person name="Fiorentin L."/>
            <person name="Franco G.R."/>
            <person name="Freitas N.S.A."/>
            <person name="Frias D."/>
            <person name="Grangeiro T.B."/>
            <person name="Grisard E.C."/>
            <person name="Guimaraes C.T."/>
            <person name="Hungria M."/>
            <person name="Jardim S.N."/>
            <person name="Krieger M.A."/>
            <person name="Laurino J.P."/>
            <person name="Lima L.F.A."/>
            <person name="Lopes M.I."/>
            <person name="Loreto E.L.S."/>
            <person name="Madeira H.M.F."/>
            <person name="Manfio G.P."/>
            <person name="Maranhao A.Q."/>
            <person name="Martinkovics C.T."/>
            <person name="Medeiros S.R.B."/>
            <person name="Moreira M.A.M."/>
            <person name="Neiva M."/>
            <person name="Ramalho-Neto C.E."/>
            <person name="Nicolas M.F."/>
            <person name="Oliveira S.C."/>
            <person name="Paixao R.F.C."/>
            <person name="Pedrosa F.O."/>
            <person name="Pena S.D.J."/>
            <person name="Pereira M."/>
            <person name="Pereira-Ferrari L."/>
            <person name="Piffer I."/>
            <person name="Pinto L.S."/>
            <person name="Potrich D.P."/>
            <person name="Salim A.C.M."/>
            <person name="Santos F.R."/>
            <person name="Schmitt R."/>
            <person name="Schneider M.P.C."/>
            <person name="Schrank A."/>
            <person name="Schrank I.S."/>
            <person name="Schuck A.F."/>
            <person name="Seuanez H.N."/>
            <person name="Silva D.W."/>
            <person name="Silva R."/>
            <person name="Silva S.C."/>
            <person name="Soares C.M.A."/>
            <person name="Souza K.R.L."/>
            <person name="Souza R.C."/>
            <person name="Staats C.C."/>
            <person name="Steffens M.B.R."/>
            <person name="Teixeira S.M.R."/>
            <person name="Urmenyi T.P."/>
            <person name="Vainstein M.H."/>
            <person name="Zuccherato L.W."/>
            <person name="Simpson A.J.G."/>
            <person name="Zaha A."/>
        </authorList>
    </citation>
    <scope>NUCLEOTIDE SEQUENCE [LARGE SCALE GENOMIC DNA]</scope>
    <source>
        <strain>53</strain>
    </source>
</reference>
<gene>
    <name evidence="1" type="primary">rplD</name>
    <name type="ordered locus">MS53_0642</name>
</gene>
<evidence type="ECO:0000255" key="1">
    <source>
        <dbReference type="HAMAP-Rule" id="MF_01328"/>
    </source>
</evidence>
<evidence type="ECO:0000256" key="2">
    <source>
        <dbReference type="SAM" id="MobiDB-lite"/>
    </source>
</evidence>
<evidence type="ECO:0000305" key="3"/>
<organism>
    <name type="scientific">Mycoplasmopsis synoviae (strain 53)</name>
    <name type="common">Mycoplasma synoviae</name>
    <dbReference type="NCBI Taxonomy" id="262723"/>
    <lineage>
        <taxon>Bacteria</taxon>
        <taxon>Bacillati</taxon>
        <taxon>Mycoplasmatota</taxon>
        <taxon>Mycoplasmoidales</taxon>
        <taxon>Metamycoplasmataceae</taxon>
        <taxon>Mycoplasmopsis</taxon>
    </lineage>
</organism>
<keyword id="KW-1185">Reference proteome</keyword>
<keyword id="KW-0687">Ribonucleoprotein</keyword>
<keyword id="KW-0689">Ribosomal protein</keyword>
<keyword id="KW-0694">RNA-binding</keyword>
<keyword id="KW-0699">rRNA-binding</keyword>
<comment type="function">
    <text evidence="1">One of the primary rRNA binding proteins, this protein initially binds near the 5'-end of the 23S rRNA. It is important during the early stages of 50S assembly. It makes multiple contacts with different domains of the 23S rRNA in the assembled 50S subunit and ribosome.</text>
</comment>
<comment type="function">
    <text evidence="1">Forms part of the polypeptide exit tunnel.</text>
</comment>
<comment type="subunit">
    <text evidence="1">Part of the 50S ribosomal subunit.</text>
</comment>
<comment type="similarity">
    <text evidence="1">Belongs to the universal ribosomal protein uL4 family.</text>
</comment>
<sequence length="229" mass="25409">MAEVKNKKASVATPEKETVVVQKDKAAALVKPQFNAQVDKRMLVEEVHQQAIFDSILSERASRRQGTHQVKNRAAVSGSGKKPWKQKGTGRARHSSRRSPIWVGGGRAFGPQSVKNYSLKVNKKVKQLAFRSALTMLVNDKAVLVEDFKMDKISTKDLSQKLKSLNVDKLRHVILVSENATVFKSSANLKNVTTLKAHSLNVETLVRADVLLVENESMKLLTERVLGSN</sequence>
<proteinExistence type="inferred from homology"/>
<protein>
    <recommendedName>
        <fullName evidence="1">Large ribosomal subunit protein uL4</fullName>
    </recommendedName>
    <alternativeName>
        <fullName evidence="3">50S ribosomal protein L4</fullName>
    </alternativeName>
</protein>
<dbReference type="EMBL" id="AE017245">
    <property type="protein sequence ID" value="AAZ44049.2"/>
    <property type="molecule type" value="Genomic_DNA"/>
</dbReference>
<dbReference type="RefSeq" id="WP_041352130.1">
    <property type="nucleotide sequence ID" value="NC_007294.1"/>
</dbReference>
<dbReference type="SMR" id="Q4A5C2"/>
<dbReference type="STRING" id="262723.MS53_0642"/>
<dbReference type="KEGG" id="msy:MS53_0642"/>
<dbReference type="eggNOG" id="COG0088">
    <property type="taxonomic scope" value="Bacteria"/>
</dbReference>
<dbReference type="HOGENOM" id="CLU_041575_2_1_14"/>
<dbReference type="OrthoDB" id="9803201at2"/>
<dbReference type="Proteomes" id="UP000000549">
    <property type="component" value="Chromosome"/>
</dbReference>
<dbReference type="GO" id="GO:1990904">
    <property type="term" value="C:ribonucleoprotein complex"/>
    <property type="evidence" value="ECO:0007669"/>
    <property type="project" value="UniProtKB-KW"/>
</dbReference>
<dbReference type="GO" id="GO:0005840">
    <property type="term" value="C:ribosome"/>
    <property type="evidence" value="ECO:0007669"/>
    <property type="project" value="UniProtKB-KW"/>
</dbReference>
<dbReference type="GO" id="GO:0019843">
    <property type="term" value="F:rRNA binding"/>
    <property type="evidence" value="ECO:0007669"/>
    <property type="project" value="UniProtKB-UniRule"/>
</dbReference>
<dbReference type="GO" id="GO:0003735">
    <property type="term" value="F:structural constituent of ribosome"/>
    <property type="evidence" value="ECO:0007669"/>
    <property type="project" value="InterPro"/>
</dbReference>
<dbReference type="GO" id="GO:0006412">
    <property type="term" value="P:translation"/>
    <property type="evidence" value="ECO:0007669"/>
    <property type="project" value="UniProtKB-UniRule"/>
</dbReference>
<dbReference type="Gene3D" id="3.40.1370.10">
    <property type="match status" value="1"/>
</dbReference>
<dbReference type="HAMAP" id="MF_01328_B">
    <property type="entry name" value="Ribosomal_uL4_B"/>
    <property type="match status" value="1"/>
</dbReference>
<dbReference type="InterPro" id="IPR002136">
    <property type="entry name" value="Ribosomal_uL4"/>
</dbReference>
<dbReference type="InterPro" id="IPR013005">
    <property type="entry name" value="Ribosomal_uL4-like"/>
</dbReference>
<dbReference type="InterPro" id="IPR023574">
    <property type="entry name" value="Ribosomal_uL4_dom_sf"/>
</dbReference>
<dbReference type="NCBIfam" id="TIGR03953">
    <property type="entry name" value="rplD_bact"/>
    <property type="match status" value="1"/>
</dbReference>
<dbReference type="PANTHER" id="PTHR10746">
    <property type="entry name" value="50S RIBOSOMAL PROTEIN L4"/>
    <property type="match status" value="1"/>
</dbReference>
<dbReference type="PANTHER" id="PTHR10746:SF6">
    <property type="entry name" value="LARGE RIBOSOMAL SUBUNIT PROTEIN UL4M"/>
    <property type="match status" value="1"/>
</dbReference>
<dbReference type="Pfam" id="PF00573">
    <property type="entry name" value="Ribosomal_L4"/>
    <property type="match status" value="1"/>
</dbReference>
<dbReference type="SUPFAM" id="SSF52166">
    <property type="entry name" value="Ribosomal protein L4"/>
    <property type="match status" value="1"/>
</dbReference>
<feature type="chain" id="PRO_0000242400" description="Large ribosomal subunit protein uL4">
    <location>
        <begin position="1"/>
        <end position="229"/>
    </location>
</feature>
<feature type="region of interest" description="Disordered" evidence="2">
    <location>
        <begin position="62"/>
        <end position="103"/>
    </location>
</feature>
<feature type="compositionally biased region" description="Basic residues" evidence="2">
    <location>
        <begin position="82"/>
        <end position="97"/>
    </location>
</feature>